<protein>
    <recommendedName>
        <fullName evidence="1">Histidine--tRNA ligase 1</fullName>
        <ecNumber evidence="1">6.1.1.21</ecNumber>
    </recommendedName>
    <alternativeName>
        <fullName evidence="1">Histidyl-tRNA synthetase 1</fullName>
        <shortName evidence="1">HisRS 1</shortName>
    </alternativeName>
</protein>
<gene>
    <name evidence="1" type="primary">hisS-1</name>
    <name type="ordered locus">BA_3376</name>
    <name type="ordered locus">GBAA_3376</name>
    <name type="ordered locus">BAS3130</name>
</gene>
<proteinExistence type="inferred from homology"/>
<feature type="chain" id="PRO_0000136093" description="Histidine--tRNA ligase 1">
    <location>
        <begin position="1"/>
        <end position="425"/>
    </location>
</feature>
<sequence length="425" mass="47820">MEIRNVKGTKDYLPEEQVLRSKIKRACEDTFERYGCKPLETPTLNMYELMSYKYGGGDEILKEIYTLQDQGKRDLALRYDLTIPFAKVVAMNPNIRLPFKRYEIGKVFRDGPIKQGRFREFIQCDVDIVGVESVMAEAELMSMAFELFQTLNLEVTIQYNNRKLLNGILQAINIPTELTSDVILSLDKIEKIGIDGVRKDVLERGISEEMADTICNTVLSCLQLSIADFKEAFNNPLVADGVNELQQLQQYLIALGINENTIFNPFLARGLTMYTGTVYEIFLKDGSITSSIGSGGRYDNIIGAFRGDDMSYPTVGISFGLDVIYTALSQKETISSTADVFIIPLGTELQCLQIAQQLRSTTSLKIELELAGRKLKRALNYANKENIPYVLIIGEEEICTETVMLRNMKEGSEVKVPLSSLSNYL</sequence>
<reference key="1">
    <citation type="journal article" date="2003" name="Nature">
        <title>The genome sequence of Bacillus anthracis Ames and comparison to closely related bacteria.</title>
        <authorList>
            <person name="Read T.D."/>
            <person name="Peterson S.N."/>
            <person name="Tourasse N.J."/>
            <person name="Baillie L.W."/>
            <person name="Paulsen I.T."/>
            <person name="Nelson K.E."/>
            <person name="Tettelin H."/>
            <person name="Fouts D.E."/>
            <person name="Eisen J.A."/>
            <person name="Gill S.R."/>
            <person name="Holtzapple E.K."/>
            <person name="Okstad O.A."/>
            <person name="Helgason E."/>
            <person name="Rilstone J."/>
            <person name="Wu M."/>
            <person name="Kolonay J.F."/>
            <person name="Beanan M.J."/>
            <person name="Dodson R.J."/>
            <person name="Brinkac L.M."/>
            <person name="Gwinn M.L."/>
            <person name="DeBoy R.T."/>
            <person name="Madpu R."/>
            <person name="Daugherty S.C."/>
            <person name="Durkin A.S."/>
            <person name="Haft D.H."/>
            <person name="Nelson W.C."/>
            <person name="Peterson J.D."/>
            <person name="Pop M."/>
            <person name="Khouri H.M."/>
            <person name="Radune D."/>
            <person name="Benton J.L."/>
            <person name="Mahamoud Y."/>
            <person name="Jiang L."/>
            <person name="Hance I.R."/>
            <person name="Weidman J.F."/>
            <person name="Berry K.J."/>
            <person name="Plaut R.D."/>
            <person name="Wolf A.M."/>
            <person name="Watkins K.L."/>
            <person name="Nierman W.C."/>
            <person name="Hazen A."/>
            <person name="Cline R.T."/>
            <person name="Redmond C."/>
            <person name="Thwaite J.E."/>
            <person name="White O."/>
            <person name="Salzberg S.L."/>
            <person name="Thomason B."/>
            <person name="Friedlander A.M."/>
            <person name="Koehler T.M."/>
            <person name="Hanna P.C."/>
            <person name="Kolstoe A.-B."/>
            <person name="Fraser C.M."/>
        </authorList>
    </citation>
    <scope>NUCLEOTIDE SEQUENCE [LARGE SCALE GENOMIC DNA]</scope>
    <source>
        <strain>Ames / isolate Porton</strain>
    </source>
</reference>
<reference key="2">
    <citation type="journal article" date="2009" name="J. Bacteriol.">
        <title>The complete genome sequence of Bacillus anthracis Ames 'Ancestor'.</title>
        <authorList>
            <person name="Ravel J."/>
            <person name="Jiang L."/>
            <person name="Stanley S.T."/>
            <person name="Wilson M.R."/>
            <person name="Decker R.S."/>
            <person name="Read T.D."/>
            <person name="Worsham P."/>
            <person name="Keim P.S."/>
            <person name="Salzberg S.L."/>
            <person name="Fraser-Liggett C.M."/>
            <person name="Rasko D.A."/>
        </authorList>
    </citation>
    <scope>NUCLEOTIDE SEQUENCE [LARGE SCALE GENOMIC DNA]</scope>
    <source>
        <strain>Ames ancestor</strain>
    </source>
</reference>
<reference key="3">
    <citation type="submission" date="2004-01" db="EMBL/GenBank/DDBJ databases">
        <title>Complete genome sequence of Bacillus anthracis Sterne.</title>
        <authorList>
            <person name="Brettin T.S."/>
            <person name="Bruce D."/>
            <person name="Challacombe J.F."/>
            <person name="Gilna P."/>
            <person name="Han C."/>
            <person name="Hill K."/>
            <person name="Hitchcock P."/>
            <person name="Jackson P."/>
            <person name="Keim P."/>
            <person name="Longmire J."/>
            <person name="Lucas S."/>
            <person name="Okinaka R."/>
            <person name="Richardson P."/>
            <person name="Rubin E."/>
            <person name="Tice H."/>
        </authorList>
    </citation>
    <scope>NUCLEOTIDE SEQUENCE [LARGE SCALE GENOMIC DNA]</scope>
    <source>
        <strain>Sterne</strain>
    </source>
</reference>
<dbReference type="EC" id="6.1.1.21" evidence="1"/>
<dbReference type="EMBL" id="AE016879">
    <property type="protein sequence ID" value="AAP27148.1"/>
    <property type="molecule type" value="Genomic_DNA"/>
</dbReference>
<dbReference type="EMBL" id="AE017334">
    <property type="protein sequence ID" value="AAT32484.1"/>
    <property type="molecule type" value="Genomic_DNA"/>
</dbReference>
<dbReference type="EMBL" id="AE017225">
    <property type="protein sequence ID" value="AAT55438.1"/>
    <property type="molecule type" value="Genomic_DNA"/>
</dbReference>
<dbReference type="RefSeq" id="NP_845662.1">
    <property type="nucleotide sequence ID" value="NC_003997.3"/>
</dbReference>
<dbReference type="RefSeq" id="WP_000405915.1">
    <property type="nucleotide sequence ID" value="NZ_WXXJ01000007.1"/>
</dbReference>
<dbReference type="RefSeq" id="YP_029387.1">
    <property type="nucleotide sequence ID" value="NC_005945.1"/>
</dbReference>
<dbReference type="SMR" id="Q81N41"/>
<dbReference type="STRING" id="261594.GBAA_3376"/>
<dbReference type="DNASU" id="1084846"/>
<dbReference type="GeneID" id="45023132"/>
<dbReference type="KEGG" id="ban:BA_3376"/>
<dbReference type="KEGG" id="bar:GBAA_3376"/>
<dbReference type="KEGG" id="bat:BAS3130"/>
<dbReference type="PATRIC" id="fig|198094.11.peg.3351"/>
<dbReference type="eggNOG" id="COG0124">
    <property type="taxonomic scope" value="Bacteria"/>
</dbReference>
<dbReference type="HOGENOM" id="CLU_025113_3_0_9"/>
<dbReference type="OMA" id="MNYPTVG"/>
<dbReference type="Proteomes" id="UP000000427">
    <property type="component" value="Chromosome"/>
</dbReference>
<dbReference type="Proteomes" id="UP000000594">
    <property type="component" value="Chromosome"/>
</dbReference>
<dbReference type="GO" id="GO:0005737">
    <property type="term" value="C:cytoplasm"/>
    <property type="evidence" value="ECO:0007669"/>
    <property type="project" value="UniProtKB-SubCell"/>
</dbReference>
<dbReference type="GO" id="GO:0005524">
    <property type="term" value="F:ATP binding"/>
    <property type="evidence" value="ECO:0007669"/>
    <property type="project" value="UniProtKB-UniRule"/>
</dbReference>
<dbReference type="GO" id="GO:0140096">
    <property type="term" value="F:catalytic activity, acting on a protein"/>
    <property type="evidence" value="ECO:0007669"/>
    <property type="project" value="UniProtKB-ARBA"/>
</dbReference>
<dbReference type="GO" id="GO:0004821">
    <property type="term" value="F:histidine-tRNA ligase activity"/>
    <property type="evidence" value="ECO:0007669"/>
    <property type="project" value="UniProtKB-UniRule"/>
</dbReference>
<dbReference type="GO" id="GO:0016740">
    <property type="term" value="F:transferase activity"/>
    <property type="evidence" value="ECO:0007669"/>
    <property type="project" value="UniProtKB-ARBA"/>
</dbReference>
<dbReference type="GO" id="GO:0006427">
    <property type="term" value="P:histidyl-tRNA aminoacylation"/>
    <property type="evidence" value="ECO:0007669"/>
    <property type="project" value="UniProtKB-UniRule"/>
</dbReference>
<dbReference type="CDD" id="cd00773">
    <property type="entry name" value="HisRS-like_core"/>
    <property type="match status" value="1"/>
</dbReference>
<dbReference type="CDD" id="cd00859">
    <property type="entry name" value="HisRS_anticodon"/>
    <property type="match status" value="1"/>
</dbReference>
<dbReference type="FunFam" id="3.30.930.10:FF:000099">
    <property type="entry name" value="Histidine--tRNA ligase"/>
    <property type="match status" value="1"/>
</dbReference>
<dbReference type="FunFam" id="3.40.50.800:FF:000033">
    <property type="entry name" value="Histidine--tRNA ligase"/>
    <property type="match status" value="1"/>
</dbReference>
<dbReference type="Gene3D" id="3.40.50.800">
    <property type="entry name" value="Anticodon-binding domain"/>
    <property type="match status" value="1"/>
</dbReference>
<dbReference type="Gene3D" id="3.30.930.10">
    <property type="entry name" value="Bira Bifunctional Protein, Domain 2"/>
    <property type="match status" value="1"/>
</dbReference>
<dbReference type="HAMAP" id="MF_00127">
    <property type="entry name" value="His_tRNA_synth"/>
    <property type="match status" value="1"/>
</dbReference>
<dbReference type="InterPro" id="IPR006195">
    <property type="entry name" value="aa-tRNA-synth_II"/>
</dbReference>
<dbReference type="InterPro" id="IPR045864">
    <property type="entry name" value="aa-tRNA-synth_II/BPL/LPL"/>
</dbReference>
<dbReference type="InterPro" id="IPR004154">
    <property type="entry name" value="Anticodon-bd"/>
</dbReference>
<dbReference type="InterPro" id="IPR036621">
    <property type="entry name" value="Anticodon-bd_dom_sf"/>
</dbReference>
<dbReference type="InterPro" id="IPR015807">
    <property type="entry name" value="His-tRNA-ligase"/>
</dbReference>
<dbReference type="InterPro" id="IPR041715">
    <property type="entry name" value="HisRS-like_core"/>
</dbReference>
<dbReference type="InterPro" id="IPR004516">
    <property type="entry name" value="HisRS/HisZ"/>
</dbReference>
<dbReference type="InterPro" id="IPR033656">
    <property type="entry name" value="HisRS_anticodon"/>
</dbReference>
<dbReference type="NCBIfam" id="TIGR00442">
    <property type="entry name" value="hisS"/>
    <property type="match status" value="1"/>
</dbReference>
<dbReference type="NCBIfam" id="NF009085">
    <property type="entry name" value="PRK12420.1"/>
    <property type="match status" value="1"/>
</dbReference>
<dbReference type="PANTHER" id="PTHR11476:SF7">
    <property type="entry name" value="HISTIDINE--TRNA LIGASE"/>
    <property type="match status" value="1"/>
</dbReference>
<dbReference type="PANTHER" id="PTHR11476">
    <property type="entry name" value="HISTIDYL-TRNA SYNTHETASE"/>
    <property type="match status" value="1"/>
</dbReference>
<dbReference type="Pfam" id="PF03129">
    <property type="entry name" value="HGTP_anticodon"/>
    <property type="match status" value="1"/>
</dbReference>
<dbReference type="Pfam" id="PF13393">
    <property type="entry name" value="tRNA-synt_His"/>
    <property type="match status" value="1"/>
</dbReference>
<dbReference type="PIRSF" id="PIRSF001549">
    <property type="entry name" value="His-tRNA_synth"/>
    <property type="match status" value="1"/>
</dbReference>
<dbReference type="SUPFAM" id="SSF52954">
    <property type="entry name" value="Class II aaRS ABD-related"/>
    <property type="match status" value="1"/>
</dbReference>
<dbReference type="SUPFAM" id="SSF55681">
    <property type="entry name" value="Class II aaRS and biotin synthetases"/>
    <property type="match status" value="1"/>
</dbReference>
<dbReference type="PROSITE" id="PS50862">
    <property type="entry name" value="AA_TRNA_LIGASE_II"/>
    <property type="match status" value="1"/>
</dbReference>
<organism>
    <name type="scientific">Bacillus anthracis</name>
    <dbReference type="NCBI Taxonomy" id="1392"/>
    <lineage>
        <taxon>Bacteria</taxon>
        <taxon>Bacillati</taxon>
        <taxon>Bacillota</taxon>
        <taxon>Bacilli</taxon>
        <taxon>Bacillales</taxon>
        <taxon>Bacillaceae</taxon>
        <taxon>Bacillus</taxon>
        <taxon>Bacillus cereus group</taxon>
    </lineage>
</organism>
<comment type="catalytic activity">
    <reaction evidence="1">
        <text>tRNA(His) + L-histidine + ATP = L-histidyl-tRNA(His) + AMP + diphosphate + H(+)</text>
        <dbReference type="Rhea" id="RHEA:17313"/>
        <dbReference type="Rhea" id="RHEA-COMP:9665"/>
        <dbReference type="Rhea" id="RHEA-COMP:9689"/>
        <dbReference type="ChEBI" id="CHEBI:15378"/>
        <dbReference type="ChEBI" id="CHEBI:30616"/>
        <dbReference type="ChEBI" id="CHEBI:33019"/>
        <dbReference type="ChEBI" id="CHEBI:57595"/>
        <dbReference type="ChEBI" id="CHEBI:78442"/>
        <dbReference type="ChEBI" id="CHEBI:78527"/>
        <dbReference type="ChEBI" id="CHEBI:456215"/>
        <dbReference type="EC" id="6.1.1.21"/>
    </reaction>
</comment>
<comment type="subunit">
    <text evidence="1">Homodimer.</text>
</comment>
<comment type="subcellular location">
    <subcellularLocation>
        <location evidence="1">Cytoplasm</location>
    </subcellularLocation>
</comment>
<comment type="similarity">
    <text evidence="1">Belongs to the class-II aminoacyl-tRNA synthetase family.</text>
</comment>
<accession>Q81N41</accession>
<accession>Q6HWA1</accession>
<accession>Q6KQF2</accession>
<evidence type="ECO:0000255" key="1">
    <source>
        <dbReference type="HAMAP-Rule" id="MF_00127"/>
    </source>
</evidence>
<keyword id="KW-0030">Aminoacyl-tRNA synthetase</keyword>
<keyword id="KW-0067">ATP-binding</keyword>
<keyword id="KW-0963">Cytoplasm</keyword>
<keyword id="KW-0436">Ligase</keyword>
<keyword id="KW-0547">Nucleotide-binding</keyword>
<keyword id="KW-0648">Protein biosynthesis</keyword>
<keyword id="KW-1185">Reference proteome</keyword>
<name>SYH1_BACAN</name>